<organism>
    <name type="scientific">Shigella boydii</name>
    <dbReference type="NCBI Taxonomy" id="621"/>
    <lineage>
        <taxon>Bacteria</taxon>
        <taxon>Pseudomonadati</taxon>
        <taxon>Pseudomonadota</taxon>
        <taxon>Gammaproteobacteria</taxon>
        <taxon>Enterobacterales</taxon>
        <taxon>Enterobacteriaceae</taxon>
        <taxon>Shigella</taxon>
    </lineage>
</organism>
<keyword id="KW-0328">Glycosyltransferase</keyword>
<keyword id="KW-0448">Lipopolysaccharide biosynthesis</keyword>
<keyword id="KW-0808">Transferase</keyword>
<sequence>MIDNLIKRTPEINRLLENKRVTGVVTFVNPYSYYKIKEYNKISQLDYIYIDGILLLKLFNFVNGTKIKRHSFDYSSIAKTVFNYSIQNKMKIGLIGSKDYEIEQAVKNIRKKHPGIDISYFHSGYFSSLEEKSSVIDSVIKKSDIIICGLGTPAQEELALDIKIKSNEHLIFTCGGFFTQTASRADFYYPWIKRYNLMWLQRIVLYKHVRKRFFIDYPKFIVRFISENLMKIFTRSN</sequence>
<proteinExistence type="evidence at protein level"/>
<protein>
    <recommendedName>
        <fullName>UDP-Gal:alpha-D-GlcNAc-diphosphoundecaprenol beta-1,4-galactosyltransferase</fullName>
        <ecNumber>2.4.1.304</ecNumber>
    </recommendedName>
</protein>
<gene>
    <name type="primary">wfeD</name>
</gene>
<reference key="1">
    <citation type="journal article" date="2008" name="FEMS Microbiol. Rev.">
        <title>Structure and genetics of Shigella O antigens.</title>
        <authorList>
            <person name="Liu B."/>
            <person name="Knirel Y.A."/>
            <person name="Feng L."/>
            <person name="Perepelov A.V."/>
            <person name="Senchenkova S.N."/>
            <person name="Wang Q."/>
            <person name="Reeves P.R."/>
            <person name="Wang L."/>
        </authorList>
    </citation>
    <scope>NUCLEOTIDE SEQUENCE [GENOMIC DNA]</scope>
</reference>
<reference key="2">
    <citation type="journal article" date="2011" name="J. Bacteriol.">
        <title>Biochemical characterization of UDP-Gal:GlcNAc-pyrophosphate-lipid beta-1,4-Galactosyltransferase WfeD, a new enzyme from Shigella boydii type 14 that catalyzes the second step in O-antigen repeating-unit synthesis.</title>
        <authorList>
            <person name="Xu C."/>
            <person name="Liu B."/>
            <person name="Hu B."/>
            <person name="Han Y."/>
            <person name="Feng L."/>
            <person name="Allingham J.S."/>
            <person name="Szarek W.A."/>
            <person name="Wang L."/>
            <person name="Brockhausen I."/>
        </authorList>
    </citation>
    <scope>FUNCTION</scope>
    <scope>BIOPHYSICOCHEMICAL PROPERTIES</scope>
    <scope>COFACTOR</scope>
    <scope>CATALYTIC ACTIVITY</scope>
    <scope>MUTAGENESIS OF ASP-99; GLU-101; GLU-103; ARG-210; LYS-211 AND ARG-212</scope>
    <source>
        <strain>B14</strain>
    </source>
</reference>
<comment type="function">
    <text evidence="2">Galactosyltransferase that adds one galactose residue in the beta-1-4 linkage to GlcNAc-alpha-pyrophosphate-lipid in the biosynthesis of the O-polysaccharide repeating unit of the O antigen.</text>
</comment>
<comment type="catalytic activity">
    <reaction evidence="2">
        <text>N-acetyl-alpha-D-glucosaminyl-di-trans,octa-cis-undecaprenyl diphosphate + UDP-alpha-D-galactose = beta-D-Gal-(1-&gt;4)-alpha-D-GlcNAc-di-trans,octa-cis-undecaprenyl diphosphate + UDP + H(+)</text>
        <dbReference type="Rhea" id="RHEA:36751"/>
        <dbReference type="ChEBI" id="CHEBI:15378"/>
        <dbReference type="ChEBI" id="CHEBI:58223"/>
        <dbReference type="ChEBI" id="CHEBI:62959"/>
        <dbReference type="ChEBI" id="CHEBI:66914"/>
        <dbReference type="ChEBI" id="CHEBI:73984"/>
        <dbReference type="EC" id="2.4.1.304"/>
    </reaction>
</comment>
<comment type="cofactor">
    <cofactor evidence="2">
        <name>Mn(2+)</name>
        <dbReference type="ChEBI" id="CHEBI:29035"/>
    </cofactor>
    <cofactor evidence="2">
        <name>Ni(2+)</name>
        <dbReference type="ChEBI" id="CHEBI:49786"/>
    </cofactor>
    <cofactor evidence="2">
        <name>Pb(2+)</name>
        <dbReference type="ChEBI" id="CHEBI:49807"/>
    </cofactor>
    <text evidence="2">Divalent metal cation. Mn(2+), Ni(2+), and Pb(2+) enhance the enzyme activity.</text>
</comment>
<comment type="biophysicochemical properties">
    <kinetics>
        <KM evidence="2">0.25 mM for UDP-alpha-D-galactose</KM>
        <KM evidence="2">0.1 mM for N-acetyl-alpha-D-glucosaminyl-diphospho-ditrans,octacis-undecaprenol</KM>
        <Vmax evidence="2">40.0 umol/h/mg enzyme with UDP-alpha-D-galactose as substrate</Vmax>
        <Vmax evidence="2">42.0 umol/h/mg enzyme with N-acetyl-alpha-D-glucosaminyl-diphospho-ditrans,octacis-undecaprenol as substrate</Vmax>
    </kinetics>
</comment>
<comment type="pathway">
    <text>Bacterial outer membrane biogenesis; LPS O-antigen biosynthesis.</text>
</comment>
<comment type="similarity">
    <text evidence="3">Belongs to the glycosyltransferase 26 family.</text>
</comment>
<dbReference type="EC" id="2.4.1.304"/>
<dbReference type="EMBL" id="EU296409">
    <property type="protein sequence ID" value="ACD37055.1"/>
    <property type="molecule type" value="Genomic_DNA"/>
</dbReference>
<dbReference type="RefSeq" id="WP_000566739.1">
    <property type="nucleotide sequence ID" value="NZ_CP026766.1"/>
</dbReference>
<dbReference type="SMR" id="B5L3X1"/>
<dbReference type="CAZy" id="GT26">
    <property type="family name" value="Glycosyltransferase Family 26"/>
</dbReference>
<dbReference type="KEGG" id="ag:ACD37055"/>
<dbReference type="UniPathway" id="UPA00281"/>
<dbReference type="GO" id="GO:0003831">
    <property type="term" value="F:beta-N-acetylglucosaminylglycopeptide beta-1,4-galactosyltransferase activity"/>
    <property type="evidence" value="ECO:0000314"/>
    <property type="project" value="CACAO"/>
</dbReference>
<dbReference type="GO" id="GO:0016758">
    <property type="term" value="F:hexosyltransferase activity"/>
    <property type="evidence" value="ECO:0000314"/>
    <property type="project" value="UniProtKB"/>
</dbReference>
<dbReference type="GO" id="GO:0009243">
    <property type="term" value="P:O antigen biosynthetic process"/>
    <property type="evidence" value="ECO:0000314"/>
    <property type="project" value="UniProtKB"/>
</dbReference>
<dbReference type="CDD" id="cd06533">
    <property type="entry name" value="Glyco_transf_WecG_TagA"/>
    <property type="match status" value="1"/>
</dbReference>
<dbReference type="InterPro" id="IPR004629">
    <property type="entry name" value="WecG_TagA_CpsF"/>
</dbReference>
<dbReference type="PANTHER" id="PTHR34136">
    <property type="match status" value="1"/>
</dbReference>
<dbReference type="PANTHER" id="PTHR34136:SF1">
    <property type="entry name" value="UDP-N-ACETYL-D-MANNOSAMINURONIC ACID TRANSFERASE"/>
    <property type="match status" value="1"/>
</dbReference>
<dbReference type="Pfam" id="PF03808">
    <property type="entry name" value="Glyco_tran_WecG"/>
    <property type="match status" value="1"/>
</dbReference>
<accession>B5L3X1</accession>
<name>WFED_SHIBO</name>
<feature type="chain" id="PRO_0000424132" description="UDP-Gal:alpha-D-GlcNAc-diphosphoundecaprenol beta-1,4-galactosyltransferase">
    <location>
        <begin position="1"/>
        <end position="237"/>
    </location>
</feature>
<feature type="active site" description="Nucleophile" evidence="1">
    <location>
        <position position="101"/>
    </location>
</feature>
<feature type="mutagenesis site" description="Does not affect catalytic activity." evidence="2">
    <original>D</original>
    <variation>A</variation>
    <location>
        <position position="99"/>
    </location>
</feature>
<feature type="mutagenesis site" description="Abolishes catalytic activity." evidence="2">
    <original>E</original>
    <variation>A</variation>
    <location>
        <position position="101"/>
    </location>
</feature>
<feature type="mutagenesis site" description="Does not affect catalytic activity." evidence="2">
    <original>E</original>
    <variation>A</variation>
    <location>
        <position position="103"/>
    </location>
</feature>
<feature type="mutagenesis site" description="Does not affect catalytic activity." evidence="2">
    <original>R</original>
    <variation>A</variation>
    <location>
        <position position="210"/>
    </location>
</feature>
<feature type="mutagenesis site" description="Abolishes catalytic activity." evidence="2">
    <original>K</original>
    <variation>A</variation>
    <location>
        <position position="211"/>
    </location>
</feature>
<feature type="mutagenesis site" description="Does not affect catalytic activity." evidence="2">
    <original>R</original>
    <variation>A</variation>
    <location>
        <position position="212"/>
    </location>
</feature>
<evidence type="ECO:0000255" key="1"/>
<evidence type="ECO:0000269" key="2">
    <source>
    </source>
</evidence>
<evidence type="ECO:0000305" key="3"/>